<keyword id="KW-1185">Reference proteome</keyword>
<proteinExistence type="inferred from homology"/>
<sequence>MDQCLQVAWIAGSDAITEQSNFIFSPMCLRAGLALLATGADGETLRQMLAFLGSEHIHQLNATSAGLLAEMQAWPQLVFAAGIFVDRSLRLRPEFKSTAAAAHGGIHAICGLPEPDHEGALNQRHPPWHLEQRHDVRPCERHALQGEVGSDVRVVEHHAGNVPPPRRHDGAGAVPVGPRDALRRQGAKFEFHGLEFKVLQLFYKMVGRDGQVDFGFGAPCFCMLVFLPIKRDGLRHLLRMAVTEPDFVTRCVPRSRQIVTPCKVPKFKFSSQLDAGGALAQLGLGAPFDPDAADLSRMAVNTPPAGLYVSTMRQKCAVEVDEEGTTAVEAMYSPSSPGYSPGYQPPRPPPMSFVAEHPFMFAIVEYKKAQVLFLGHVMDPSKEDQ</sequence>
<protein>
    <recommendedName>
        <fullName>Putative non-inhibitory serpin-Z11</fullName>
    </recommendedName>
    <alternativeName>
        <fullName>OrysaZ11</fullName>
    </alternativeName>
</protein>
<feature type="chain" id="PRO_0000334563" description="Putative non-inhibitory serpin-Z11">
    <location>
        <begin position="1"/>
        <end position="385"/>
    </location>
</feature>
<feature type="region of interest" description="RCL">
    <location>
        <begin position="324"/>
        <end position="348"/>
    </location>
</feature>
<feature type="site" description="Reactive bond" evidence="2">
    <location>
        <begin position="338"/>
        <end position="339"/>
    </location>
</feature>
<evidence type="ECO:0000250" key="1"/>
<evidence type="ECO:0000255" key="2"/>
<evidence type="ECO:0000305" key="3"/>
<reference key="1">
    <citation type="journal article" date="2002" name="Nature">
        <title>Sequence and analysis of rice chromosome 4.</title>
        <authorList>
            <person name="Feng Q."/>
            <person name="Zhang Y."/>
            <person name="Hao P."/>
            <person name="Wang S."/>
            <person name="Fu G."/>
            <person name="Huang Y."/>
            <person name="Li Y."/>
            <person name="Zhu J."/>
            <person name="Liu Y."/>
            <person name="Hu X."/>
            <person name="Jia P."/>
            <person name="Zhang Y."/>
            <person name="Zhao Q."/>
            <person name="Ying K."/>
            <person name="Yu S."/>
            <person name="Tang Y."/>
            <person name="Weng Q."/>
            <person name="Zhang L."/>
            <person name="Lu Y."/>
            <person name="Mu J."/>
            <person name="Lu Y."/>
            <person name="Zhang L.S."/>
            <person name="Yu Z."/>
            <person name="Fan D."/>
            <person name="Liu X."/>
            <person name="Lu T."/>
            <person name="Li C."/>
            <person name="Wu Y."/>
            <person name="Sun T."/>
            <person name="Lei H."/>
            <person name="Li T."/>
            <person name="Hu H."/>
            <person name="Guan J."/>
            <person name="Wu M."/>
            <person name="Zhang R."/>
            <person name="Zhou B."/>
            <person name="Chen Z."/>
            <person name="Chen L."/>
            <person name="Jin Z."/>
            <person name="Wang R."/>
            <person name="Yin H."/>
            <person name="Cai Z."/>
            <person name="Ren S."/>
            <person name="Lv G."/>
            <person name="Gu W."/>
            <person name="Zhu G."/>
            <person name="Tu Y."/>
            <person name="Jia J."/>
            <person name="Zhang Y."/>
            <person name="Chen J."/>
            <person name="Kang H."/>
            <person name="Chen X."/>
            <person name="Shao C."/>
            <person name="Sun Y."/>
            <person name="Hu Q."/>
            <person name="Zhang X."/>
            <person name="Zhang W."/>
            <person name="Wang L."/>
            <person name="Ding C."/>
            <person name="Sheng H."/>
            <person name="Gu J."/>
            <person name="Chen S."/>
            <person name="Ni L."/>
            <person name="Zhu F."/>
            <person name="Chen W."/>
            <person name="Lan L."/>
            <person name="Lai Y."/>
            <person name="Cheng Z."/>
            <person name="Gu M."/>
            <person name="Jiang J."/>
            <person name="Li J."/>
            <person name="Hong G."/>
            <person name="Xue Y."/>
            <person name="Han B."/>
        </authorList>
    </citation>
    <scope>NUCLEOTIDE SEQUENCE [LARGE SCALE GENOMIC DNA]</scope>
    <source>
        <strain>cv. Nipponbare</strain>
    </source>
</reference>
<reference key="2">
    <citation type="journal article" date="2005" name="Nature">
        <title>The map-based sequence of the rice genome.</title>
        <authorList>
            <consortium name="International rice genome sequencing project (IRGSP)"/>
        </authorList>
    </citation>
    <scope>NUCLEOTIDE SEQUENCE [LARGE SCALE GENOMIC DNA]</scope>
    <source>
        <strain>cv. Nipponbare</strain>
    </source>
</reference>
<reference key="3">
    <citation type="journal article" date="2013" name="Rice">
        <title>Improvement of the Oryza sativa Nipponbare reference genome using next generation sequence and optical map data.</title>
        <authorList>
            <person name="Kawahara Y."/>
            <person name="de la Bastide M."/>
            <person name="Hamilton J.P."/>
            <person name="Kanamori H."/>
            <person name="McCombie W.R."/>
            <person name="Ouyang S."/>
            <person name="Schwartz D.C."/>
            <person name="Tanaka T."/>
            <person name="Wu J."/>
            <person name="Zhou S."/>
            <person name="Childs K.L."/>
            <person name="Davidson R.M."/>
            <person name="Lin H."/>
            <person name="Quesada-Ocampo L."/>
            <person name="Vaillancourt B."/>
            <person name="Sakai H."/>
            <person name="Lee S.S."/>
            <person name="Kim J."/>
            <person name="Numa H."/>
            <person name="Itoh T."/>
            <person name="Buell C.R."/>
            <person name="Matsumoto T."/>
        </authorList>
    </citation>
    <scope>GENOME REANNOTATION</scope>
    <source>
        <strain>cv. Nipponbare</strain>
    </source>
</reference>
<reference key="4">
    <citation type="journal article" date="2005" name="PLoS Biol.">
        <title>The genomes of Oryza sativa: a history of duplications.</title>
        <authorList>
            <person name="Yu J."/>
            <person name="Wang J."/>
            <person name="Lin W."/>
            <person name="Li S."/>
            <person name="Li H."/>
            <person name="Zhou J."/>
            <person name="Ni P."/>
            <person name="Dong W."/>
            <person name="Hu S."/>
            <person name="Zeng C."/>
            <person name="Zhang J."/>
            <person name="Zhang Y."/>
            <person name="Li R."/>
            <person name="Xu Z."/>
            <person name="Li S."/>
            <person name="Li X."/>
            <person name="Zheng H."/>
            <person name="Cong L."/>
            <person name="Lin L."/>
            <person name="Yin J."/>
            <person name="Geng J."/>
            <person name="Li G."/>
            <person name="Shi J."/>
            <person name="Liu J."/>
            <person name="Lv H."/>
            <person name="Li J."/>
            <person name="Wang J."/>
            <person name="Deng Y."/>
            <person name="Ran L."/>
            <person name="Shi X."/>
            <person name="Wang X."/>
            <person name="Wu Q."/>
            <person name="Li C."/>
            <person name="Ren X."/>
            <person name="Wang J."/>
            <person name="Wang X."/>
            <person name="Li D."/>
            <person name="Liu D."/>
            <person name="Zhang X."/>
            <person name="Ji Z."/>
            <person name="Zhao W."/>
            <person name="Sun Y."/>
            <person name="Zhang Z."/>
            <person name="Bao J."/>
            <person name="Han Y."/>
            <person name="Dong L."/>
            <person name="Ji J."/>
            <person name="Chen P."/>
            <person name="Wu S."/>
            <person name="Liu J."/>
            <person name="Xiao Y."/>
            <person name="Bu D."/>
            <person name="Tan J."/>
            <person name="Yang L."/>
            <person name="Ye C."/>
            <person name="Zhang J."/>
            <person name="Xu J."/>
            <person name="Zhou Y."/>
            <person name="Yu Y."/>
            <person name="Zhang B."/>
            <person name="Zhuang S."/>
            <person name="Wei H."/>
            <person name="Liu B."/>
            <person name="Lei M."/>
            <person name="Yu H."/>
            <person name="Li Y."/>
            <person name="Xu H."/>
            <person name="Wei S."/>
            <person name="He X."/>
            <person name="Fang L."/>
            <person name="Zhang Z."/>
            <person name="Zhang Y."/>
            <person name="Huang X."/>
            <person name="Su Z."/>
            <person name="Tong W."/>
            <person name="Li J."/>
            <person name="Tong Z."/>
            <person name="Li S."/>
            <person name="Ye J."/>
            <person name="Wang L."/>
            <person name="Fang L."/>
            <person name="Lei T."/>
            <person name="Chen C.-S."/>
            <person name="Chen H.-C."/>
            <person name="Xu Z."/>
            <person name="Li H."/>
            <person name="Huang H."/>
            <person name="Zhang F."/>
            <person name="Xu H."/>
            <person name="Li N."/>
            <person name="Zhao C."/>
            <person name="Li S."/>
            <person name="Dong L."/>
            <person name="Huang Y."/>
            <person name="Li L."/>
            <person name="Xi Y."/>
            <person name="Qi Q."/>
            <person name="Li W."/>
            <person name="Zhang B."/>
            <person name="Hu W."/>
            <person name="Zhang Y."/>
            <person name="Tian X."/>
            <person name="Jiao Y."/>
            <person name="Liang X."/>
            <person name="Jin J."/>
            <person name="Gao L."/>
            <person name="Zheng W."/>
            <person name="Hao B."/>
            <person name="Liu S.-M."/>
            <person name="Wang W."/>
            <person name="Yuan L."/>
            <person name="Cao M."/>
            <person name="McDermott J."/>
            <person name="Samudrala R."/>
            <person name="Wang J."/>
            <person name="Wong G.K.-S."/>
            <person name="Yang H."/>
        </authorList>
    </citation>
    <scope>NUCLEOTIDE SEQUENCE [LARGE SCALE GENOMIC DNA]</scope>
    <source>
        <strain>cv. Nipponbare</strain>
    </source>
</reference>
<reference key="5">
    <citation type="journal article" date="2008" name="Funct. Integr. Genomics">
        <title>Serpins in plants and green algae.</title>
        <authorList>
            <person name="Roberts T.H."/>
            <person name="Hejgaard J."/>
        </authorList>
    </citation>
    <scope>GENE FAMILY</scope>
    <scope>NOMENCLATURE</scope>
</reference>
<dbReference type="EMBL" id="AL663006">
    <property type="protein sequence ID" value="CAE04579.1"/>
    <property type="molecule type" value="Genomic_DNA"/>
</dbReference>
<dbReference type="EMBL" id="AP014960">
    <property type="status" value="NOT_ANNOTATED_CDS"/>
    <property type="molecule type" value="Genomic_DNA"/>
</dbReference>
<dbReference type="EMBL" id="CM000141">
    <property type="status" value="NOT_ANNOTATED_CDS"/>
    <property type="molecule type" value="Genomic_DNA"/>
</dbReference>
<dbReference type="SMR" id="Q7XMK0"/>
<dbReference type="STRING" id="39947.Q7XMK0"/>
<dbReference type="PaxDb" id="39947-Q7XMK0"/>
<dbReference type="eggNOG" id="KOG2392">
    <property type="taxonomic scope" value="Eukaryota"/>
</dbReference>
<dbReference type="InParanoid" id="Q7XMK0"/>
<dbReference type="Proteomes" id="UP000000763">
    <property type="component" value="Chromosome 4"/>
</dbReference>
<dbReference type="Proteomes" id="UP000007752">
    <property type="component" value="Chromosome 4"/>
</dbReference>
<dbReference type="Proteomes" id="UP000059680">
    <property type="component" value="Chromosome 4"/>
</dbReference>
<dbReference type="GO" id="GO:0005615">
    <property type="term" value="C:extracellular space"/>
    <property type="evidence" value="ECO:0000318"/>
    <property type="project" value="GO_Central"/>
</dbReference>
<dbReference type="GO" id="GO:0004867">
    <property type="term" value="F:serine-type endopeptidase inhibitor activity"/>
    <property type="evidence" value="ECO:0007669"/>
    <property type="project" value="InterPro"/>
</dbReference>
<dbReference type="Gene3D" id="2.30.39.10">
    <property type="entry name" value="Alpha-1-antitrypsin, domain 1"/>
    <property type="match status" value="1"/>
</dbReference>
<dbReference type="Gene3D" id="3.30.497.10">
    <property type="entry name" value="Antithrombin, subunit I, domain 2"/>
    <property type="match status" value="2"/>
</dbReference>
<dbReference type="InterPro" id="IPR023796">
    <property type="entry name" value="Serpin_dom"/>
</dbReference>
<dbReference type="InterPro" id="IPR000215">
    <property type="entry name" value="Serpin_fam"/>
</dbReference>
<dbReference type="InterPro" id="IPR036186">
    <property type="entry name" value="Serpin_sf"/>
</dbReference>
<dbReference type="InterPro" id="IPR042178">
    <property type="entry name" value="Serpin_sf_1"/>
</dbReference>
<dbReference type="InterPro" id="IPR042185">
    <property type="entry name" value="Serpin_sf_2"/>
</dbReference>
<dbReference type="PANTHER" id="PTHR11461:SF286">
    <property type="entry name" value="NON-INHIBITORY SERPIN-Z11-RELATED"/>
    <property type="match status" value="1"/>
</dbReference>
<dbReference type="PANTHER" id="PTHR11461">
    <property type="entry name" value="SERINE PROTEASE INHIBITOR, SERPIN"/>
    <property type="match status" value="1"/>
</dbReference>
<dbReference type="Pfam" id="PF00079">
    <property type="entry name" value="Serpin"/>
    <property type="match status" value="2"/>
</dbReference>
<dbReference type="SMART" id="SM00093">
    <property type="entry name" value="SERPIN"/>
    <property type="match status" value="1"/>
</dbReference>
<dbReference type="SUPFAM" id="SSF56574">
    <property type="entry name" value="Serpins"/>
    <property type="match status" value="2"/>
</dbReference>
<gene>
    <name type="ordered locus">Os04g0533700</name>
    <name type="ordered locus">LOC_Os04g45110</name>
    <name type="ORF">OsJ_014933</name>
    <name type="ORF">OSJNBb0039L24.18</name>
</gene>
<organism>
    <name type="scientific">Oryza sativa subsp. japonica</name>
    <name type="common">Rice</name>
    <dbReference type="NCBI Taxonomy" id="39947"/>
    <lineage>
        <taxon>Eukaryota</taxon>
        <taxon>Viridiplantae</taxon>
        <taxon>Streptophyta</taxon>
        <taxon>Embryophyta</taxon>
        <taxon>Tracheophyta</taxon>
        <taxon>Spermatophyta</taxon>
        <taxon>Magnoliopsida</taxon>
        <taxon>Liliopsida</taxon>
        <taxon>Poales</taxon>
        <taxon>Poaceae</taxon>
        <taxon>BOP clade</taxon>
        <taxon>Oryzoideae</taxon>
        <taxon>Oryzeae</taxon>
        <taxon>Oryzinae</taxon>
        <taxon>Oryza</taxon>
        <taxon>Oryza sativa</taxon>
    </lineage>
</organism>
<accession>Q7XMK0</accession>
<comment type="domain">
    <text evidence="1">The reactive center loop (RCL) extends out from the body of the protein and directs binding to the target protease. The protease cleaves the serpin at the reactive site within the RCL, establishing a covalent linkage between the carboxyl group of the serpin reactive site and the serine hydroxyl of the protease. The resulting inactive serpin-protease complex is highly stable (By similarity).</text>
</comment>
<comment type="similarity">
    <text evidence="3">Belongs to the serpin family.</text>
</comment>
<comment type="caution">
    <text evidence="3">According to PubMed:18060440, it is predicted to be a non-inhibitory serpin due to Val-328 and Glu-329 which differ from the conserved residues in the reactive center loop (RCL) that is involved after cleavage in covalent linking and inhibition of the target proteinase.</text>
</comment>
<name>SPZ11_ORYSJ</name>